<accession>A5CQ53</accession>
<evidence type="ECO:0000255" key="1">
    <source>
        <dbReference type="HAMAP-Rule" id="MF_01396"/>
    </source>
</evidence>
<comment type="function">
    <text evidence="1">F(1)F(0) ATP synthase produces ATP from ADP in the presence of a proton or sodium gradient. F-type ATPases consist of two structural domains, F(1) containing the extramembraneous catalytic core and F(0) containing the membrane proton channel, linked together by a central stalk and a peripheral stalk. During catalysis, ATP synthesis in the catalytic domain of F(1) is coupled via a rotary mechanism of the central stalk subunits to proton translocation.</text>
</comment>
<comment type="function">
    <text evidence="1">Key component of the F(0) channel; it plays a direct role in translocation across the membrane. A homomeric c-ring of between 10-14 subunits forms the central stalk rotor element with the F(1) delta and epsilon subunits.</text>
</comment>
<comment type="subunit">
    <text evidence="1">F-type ATPases have 2 components, F(1) - the catalytic core - and F(0) - the membrane proton channel. F(1) has five subunits: alpha(3), beta(3), gamma(1), delta(1), epsilon(1). F(0) has three main subunits: a(1), b(2) and c(10-14). The alpha and beta chains form an alternating ring which encloses part of the gamma chain. F(1) is attached to F(0) by a central stalk formed by the gamma and epsilon chains, while a peripheral stalk is formed by the delta and b chains.</text>
</comment>
<comment type="subcellular location">
    <subcellularLocation>
        <location evidence="1">Cell membrane</location>
        <topology evidence="1">Multi-pass membrane protein</topology>
    </subcellularLocation>
</comment>
<comment type="similarity">
    <text evidence="1">Belongs to the ATPase C chain family.</text>
</comment>
<gene>
    <name evidence="1" type="primary">atpE</name>
    <name type="ordered locus">CMM_1164</name>
</gene>
<protein>
    <recommendedName>
        <fullName evidence="1">ATP synthase subunit c</fullName>
    </recommendedName>
    <alternativeName>
        <fullName evidence="1">ATP synthase F(0) sector subunit c</fullName>
    </alternativeName>
    <alternativeName>
        <fullName evidence="1">F-type ATPase subunit c</fullName>
        <shortName evidence="1">F-ATPase subunit c</shortName>
    </alternativeName>
    <alternativeName>
        <fullName evidence="1">Lipid-binding protein</fullName>
    </alternativeName>
</protein>
<keyword id="KW-0066">ATP synthesis</keyword>
<keyword id="KW-1003">Cell membrane</keyword>
<keyword id="KW-0138">CF(0)</keyword>
<keyword id="KW-0375">Hydrogen ion transport</keyword>
<keyword id="KW-0406">Ion transport</keyword>
<keyword id="KW-0446">Lipid-binding</keyword>
<keyword id="KW-0472">Membrane</keyword>
<keyword id="KW-0812">Transmembrane</keyword>
<keyword id="KW-1133">Transmembrane helix</keyword>
<keyword id="KW-0813">Transport</keyword>
<proteinExistence type="inferred from homology"/>
<organism>
    <name type="scientific">Clavibacter michiganensis subsp. michiganensis (strain NCPPB 382)</name>
    <dbReference type="NCBI Taxonomy" id="443906"/>
    <lineage>
        <taxon>Bacteria</taxon>
        <taxon>Bacillati</taxon>
        <taxon>Actinomycetota</taxon>
        <taxon>Actinomycetes</taxon>
        <taxon>Micrococcales</taxon>
        <taxon>Microbacteriaceae</taxon>
        <taxon>Clavibacter</taxon>
    </lineage>
</organism>
<sequence length="77" mass="7873">MDPIILAEINGNIATVGYGLAAIGPGIGVGIVAGKTVEAMARQPEMAGSLRTTMFLGIAFSEALALIGLATYFIFTN</sequence>
<reference key="1">
    <citation type="journal article" date="2008" name="J. Bacteriol.">
        <title>The genome sequence of the tomato-pathogenic actinomycete Clavibacter michiganensis subsp. michiganensis NCPPB382 reveals a large island involved in pathogenicity.</title>
        <authorList>
            <person name="Gartemann K.-H."/>
            <person name="Abt B."/>
            <person name="Bekel T."/>
            <person name="Burger A."/>
            <person name="Engemann J."/>
            <person name="Fluegel M."/>
            <person name="Gaigalat L."/>
            <person name="Goesmann A."/>
            <person name="Graefen I."/>
            <person name="Kalinowski J."/>
            <person name="Kaup O."/>
            <person name="Kirchner O."/>
            <person name="Krause L."/>
            <person name="Linke B."/>
            <person name="McHardy A."/>
            <person name="Meyer F."/>
            <person name="Pohle S."/>
            <person name="Rueckert C."/>
            <person name="Schneiker S."/>
            <person name="Zellermann E.-M."/>
            <person name="Puehler A."/>
            <person name="Eichenlaub R."/>
            <person name="Kaiser O."/>
            <person name="Bartels D."/>
        </authorList>
    </citation>
    <scope>NUCLEOTIDE SEQUENCE [LARGE SCALE GENOMIC DNA]</scope>
    <source>
        <strain>NCPPB 382</strain>
    </source>
</reference>
<name>ATPL_CLAM3</name>
<feature type="chain" id="PRO_1000184349" description="ATP synthase subunit c">
    <location>
        <begin position="1"/>
        <end position="77"/>
    </location>
</feature>
<feature type="transmembrane region" description="Helical" evidence="1">
    <location>
        <begin position="13"/>
        <end position="33"/>
    </location>
</feature>
<feature type="transmembrane region" description="Helical" evidence="1">
    <location>
        <begin position="55"/>
        <end position="75"/>
    </location>
</feature>
<feature type="site" description="Reversibly protonated during proton transport" evidence="1">
    <location>
        <position position="62"/>
    </location>
</feature>
<dbReference type="EMBL" id="AM711867">
    <property type="protein sequence ID" value="CAN01208.1"/>
    <property type="molecule type" value="Genomic_DNA"/>
</dbReference>
<dbReference type="RefSeq" id="WP_012037850.1">
    <property type="nucleotide sequence ID" value="NC_009480.1"/>
</dbReference>
<dbReference type="SMR" id="A5CQ53"/>
<dbReference type="KEGG" id="cmi:CMM_1164"/>
<dbReference type="eggNOG" id="COG0636">
    <property type="taxonomic scope" value="Bacteria"/>
</dbReference>
<dbReference type="HOGENOM" id="CLU_148047_5_2_11"/>
<dbReference type="OrthoDB" id="3183855at2"/>
<dbReference type="Proteomes" id="UP000001564">
    <property type="component" value="Chromosome"/>
</dbReference>
<dbReference type="GO" id="GO:0005886">
    <property type="term" value="C:plasma membrane"/>
    <property type="evidence" value="ECO:0007669"/>
    <property type="project" value="UniProtKB-SubCell"/>
</dbReference>
<dbReference type="GO" id="GO:0045259">
    <property type="term" value="C:proton-transporting ATP synthase complex"/>
    <property type="evidence" value="ECO:0007669"/>
    <property type="project" value="UniProtKB-KW"/>
</dbReference>
<dbReference type="GO" id="GO:0033177">
    <property type="term" value="C:proton-transporting two-sector ATPase complex, proton-transporting domain"/>
    <property type="evidence" value="ECO:0007669"/>
    <property type="project" value="InterPro"/>
</dbReference>
<dbReference type="GO" id="GO:0008289">
    <property type="term" value="F:lipid binding"/>
    <property type="evidence" value="ECO:0007669"/>
    <property type="project" value="UniProtKB-KW"/>
</dbReference>
<dbReference type="GO" id="GO:0046933">
    <property type="term" value="F:proton-transporting ATP synthase activity, rotational mechanism"/>
    <property type="evidence" value="ECO:0007669"/>
    <property type="project" value="UniProtKB-UniRule"/>
</dbReference>
<dbReference type="CDD" id="cd18121">
    <property type="entry name" value="ATP-synt_Fo_c"/>
    <property type="match status" value="1"/>
</dbReference>
<dbReference type="FunFam" id="1.20.20.10:FF:000002">
    <property type="entry name" value="ATP synthase subunit c"/>
    <property type="match status" value="1"/>
</dbReference>
<dbReference type="Gene3D" id="1.20.20.10">
    <property type="entry name" value="F1F0 ATP synthase subunit C"/>
    <property type="match status" value="1"/>
</dbReference>
<dbReference type="HAMAP" id="MF_01396">
    <property type="entry name" value="ATP_synth_c_bact"/>
    <property type="match status" value="1"/>
</dbReference>
<dbReference type="InterPro" id="IPR005953">
    <property type="entry name" value="ATP_synth_csu_bac/chlpt"/>
</dbReference>
<dbReference type="InterPro" id="IPR000454">
    <property type="entry name" value="ATP_synth_F0_csu"/>
</dbReference>
<dbReference type="InterPro" id="IPR020537">
    <property type="entry name" value="ATP_synth_F0_csu_DDCD_BS"/>
</dbReference>
<dbReference type="InterPro" id="IPR038662">
    <property type="entry name" value="ATP_synth_F0_csu_sf"/>
</dbReference>
<dbReference type="InterPro" id="IPR002379">
    <property type="entry name" value="ATPase_proteolipid_c-like_dom"/>
</dbReference>
<dbReference type="InterPro" id="IPR035921">
    <property type="entry name" value="F/V-ATP_Csub_sf"/>
</dbReference>
<dbReference type="NCBIfam" id="TIGR01260">
    <property type="entry name" value="ATP_synt_c"/>
    <property type="match status" value="1"/>
</dbReference>
<dbReference type="NCBIfam" id="NF005900">
    <property type="entry name" value="PRK07874.1"/>
    <property type="match status" value="1"/>
</dbReference>
<dbReference type="PANTHER" id="PTHR10031">
    <property type="entry name" value="ATP SYNTHASE LIPID-BINDING PROTEIN, MITOCHONDRIAL"/>
    <property type="match status" value="1"/>
</dbReference>
<dbReference type="PANTHER" id="PTHR10031:SF0">
    <property type="entry name" value="ATPASE PROTEIN 9"/>
    <property type="match status" value="1"/>
</dbReference>
<dbReference type="Pfam" id="PF00137">
    <property type="entry name" value="ATP-synt_C"/>
    <property type="match status" value="1"/>
</dbReference>
<dbReference type="PRINTS" id="PR00124">
    <property type="entry name" value="ATPASEC"/>
</dbReference>
<dbReference type="SUPFAM" id="SSF81333">
    <property type="entry name" value="F1F0 ATP synthase subunit C"/>
    <property type="match status" value="1"/>
</dbReference>
<dbReference type="PROSITE" id="PS00605">
    <property type="entry name" value="ATPASE_C"/>
    <property type="match status" value="1"/>
</dbReference>